<dbReference type="EC" id="5.3.1.1" evidence="1"/>
<dbReference type="EMBL" id="AE016877">
    <property type="status" value="NOT_ANNOTATED_CDS"/>
    <property type="molecule type" value="Genomic_DNA"/>
</dbReference>
<dbReference type="RefSeq" id="WP_001231038.1">
    <property type="nucleotide sequence ID" value="NZ_CP138336.1"/>
</dbReference>
<dbReference type="SMR" id="P60180"/>
<dbReference type="GeneID" id="93005983"/>
<dbReference type="OrthoDB" id="9809429at2"/>
<dbReference type="UniPathway" id="UPA00109">
    <property type="reaction ID" value="UER00189"/>
</dbReference>
<dbReference type="UniPathway" id="UPA00138"/>
<dbReference type="Proteomes" id="UP000001417">
    <property type="component" value="Chromosome"/>
</dbReference>
<dbReference type="GO" id="GO:0005829">
    <property type="term" value="C:cytosol"/>
    <property type="evidence" value="ECO:0000318"/>
    <property type="project" value="GO_Central"/>
</dbReference>
<dbReference type="GO" id="GO:0004807">
    <property type="term" value="F:triose-phosphate isomerase activity"/>
    <property type="evidence" value="ECO:0000318"/>
    <property type="project" value="GO_Central"/>
</dbReference>
<dbReference type="GO" id="GO:0006094">
    <property type="term" value="P:gluconeogenesis"/>
    <property type="evidence" value="ECO:0000318"/>
    <property type="project" value="GO_Central"/>
</dbReference>
<dbReference type="GO" id="GO:0046166">
    <property type="term" value="P:glyceraldehyde-3-phosphate biosynthetic process"/>
    <property type="evidence" value="ECO:0000318"/>
    <property type="project" value="GO_Central"/>
</dbReference>
<dbReference type="GO" id="GO:0019563">
    <property type="term" value="P:glycerol catabolic process"/>
    <property type="evidence" value="ECO:0000318"/>
    <property type="project" value="GO_Central"/>
</dbReference>
<dbReference type="GO" id="GO:0006096">
    <property type="term" value="P:glycolytic process"/>
    <property type="evidence" value="ECO:0000318"/>
    <property type="project" value="GO_Central"/>
</dbReference>
<dbReference type="CDD" id="cd00311">
    <property type="entry name" value="TIM"/>
    <property type="match status" value="1"/>
</dbReference>
<dbReference type="FunFam" id="3.20.20.70:FF:000016">
    <property type="entry name" value="Triosephosphate isomerase"/>
    <property type="match status" value="1"/>
</dbReference>
<dbReference type="Gene3D" id="3.20.20.70">
    <property type="entry name" value="Aldolase class I"/>
    <property type="match status" value="1"/>
</dbReference>
<dbReference type="HAMAP" id="MF_00147_B">
    <property type="entry name" value="TIM_B"/>
    <property type="match status" value="1"/>
</dbReference>
<dbReference type="InterPro" id="IPR013785">
    <property type="entry name" value="Aldolase_TIM"/>
</dbReference>
<dbReference type="InterPro" id="IPR035990">
    <property type="entry name" value="TIM_sf"/>
</dbReference>
<dbReference type="InterPro" id="IPR022896">
    <property type="entry name" value="TrioseP_Isoase_bac/euk"/>
</dbReference>
<dbReference type="InterPro" id="IPR000652">
    <property type="entry name" value="Triosephosphate_isomerase"/>
</dbReference>
<dbReference type="InterPro" id="IPR020861">
    <property type="entry name" value="Triosephosphate_isomerase_AS"/>
</dbReference>
<dbReference type="NCBIfam" id="TIGR00419">
    <property type="entry name" value="tim"/>
    <property type="match status" value="1"/>
</dbReference>
<dbReference type="PANTHER" id="PTHR21139">
    <property type="entry name" value="TRIOSEPHOSPHATE ISOMERASE"/>
    <property type="match status" value="1"/>
</dbReference>
<dbReference type="PANTHER" id="PTHR21139:SF42">
    <property type="entry name" value="TRIOSEPHOSPHATE ISOMERASE"/>
    <property type="match status" value="1"/>
</dbReference>
<dbReference type="Pfam" id="PF00121">
    <property type="entry name" value="TIM"/>
    <property type="match status" value="1"/>
</dbReference>
<dbReference type="SUPFAM" id="SSF51351">
    <property type="entry name" value="Triosephosphate isomerase (TIM)"/>
    <property type="match status" value="1"/>
</dbReference>
<dbReference type="PROSITE" id="PS00171">
    <property type="entry name" value="TIM_1"/>
    <property type="match status" value="1"/>
</dbReference>
<dbReference type="PROSITE" id="PS51440">
    <property type="entry name" value="TIM_2"/>
    <property type="match status" value="1"/>
</dbReference>
<sequence length="251" mass="26468">MRKPIIAGNWKMNKTLSEAVSFVEEVKGQIPAASAVDAVVCSPALFLERLVAATEGTDLQVGAQNMHFEKNGAFTGEISPVALSDLKVGYVVLGHSERREMFAETDESVNKKTIAAFEHGLTPIVCCGETLEERESGKTFDLVAGQVTKALAGLTEEQVKATVIAYEPIWAIGTGKSSSSADANEVCAHIRKVVAEAVSPEAAEAVRIQYGGSVKPENIKEYMAQSDIDGALVGGASLEPASFLGLLGAVK</sequence>
<keyword id="KW-0963">Cytoplasm</keyword>
<keyword id="KW-0312">Gluconeogenesis</keyword>
<keyword id="KW-0324">Glycolysis</keyword>
<keyword id="KW-0413">Isomerase</keyword>
<keyword id="KW-0597">Phosphoprotein</keyword>
<keyword id="KW-1185">Reference proteome</keyword>
<gene>
    <name evidence="1" type="primary">tpiA</name>
    <name type="ordered locus">BC_5137</name>
</gene>
<proteinExistence type="uncertain"/>
<name>TPIS_BACCR</name>
<comment type="function">
    <text evidence="1">Involved in the gluconeogenesis. Catalyzes stereospecifically the conversion of dihydroxyacetone phosphate (DHAP) to D-glyceraldehyde-3-phosphate (G3P).</text>
</comment>
<comment type="catalytic activity">
    <reaction evidence="1">
        <text>D-glyceraldehyde 3-phosphate = dihydroxyacetone phosphate</text>
        <dbReference type="Rhea" id="RHEA:18585"/>
        <dbReference type="ChEBI" id="CHEBI:57642"/>
        <dbReference type="ChEBI" id="CHEBI:59776"/>
        <dbReference type="EC" id="5.3.1.1"/>
    </reaction>
</comment>
<comment type="pathway">
    <text evidence="1">Carbohydrate biosynthesis; gluconeogenesis.</text>
</comment>
<comment type="pathway">
    <text evidence="1">Carbohydrate degradation; glycolysis; D-glyceraldehyde 3-phosphate from glycerone phosphate: step 1/1.</text>
</comment>
<comment type="subunit">
    <text evidence="1">Homodimer.</text>
</comment>
<comment type="subcellular location">
    <subcellularLocation>
        <location evidence="1">Cytoplasm</location>
    </subcellularLocation>
</comment>
<comment type="similarity">
    <text evidence="1">Belongs to the triosephosphate isomerase family.</text>
</comment>
<comment type="caution">
    <text evidence="2">Could be the product of a pseudogene.</text>
</comment>
<comment type="sequence caution" evidence="2">
    <conflict type="erroneous termination">
        <sequence resource="EMBL" id="AE016877"/>
    </conflict>
    <text>Truncated C-terminus.</text>
</comment>
<protein>
    <recommendedName>
        <fullName evidence="1">Triosephosphate isomerase</fullName>
        <shortName evidence="1">TIM</shortName>
        <shortName evidence="1">TPI</shortName>
        <ecNumber evidence="1">5.3.1.1</ecNumber>
    </recommendedName>
    <alternativeName>
        <fullName evidence="1">Triose-phosphate isomerase</fullName>
    </alternativeName>
</protein>
<organism>
    <name type="scientific">Bacillus cereus (strain ATCC 14579 / DSM 31 / CCUG 7414 / JCM 2152 / NBRC 15305 / NCIMB 9373 / NCTC 2599 / NRRL B-3711)</name>
    <dbReference type="NCBI Taxonomy" id="226900"/>
    <lineage>
        <taxon>Bacteria</taxon>
        <taxon>Bacillati</taxon>
        <taxon>Bacillota</taxon>
        <taxon>Bacilli</taxon>
        <taxon>Bacillales</taxon>
        <taxon>Bacillaceae</taxon>
        <taxon>Bacillus</taxon>
        <taxon>Bacillus cereus group</taxon>
    </lineage>
</organism>
<evidence type="ECO:0000255" key="1">
    <source>
        <dbReference type="HAMAP-Rule" id="MF_00147"/>
    </source>
</evidence>
<evidence type="ECO:0000305" key="2"/>
<feature type="chain" id="PRO_0000090175" description="Triosephosphate isomerase">
    <location>
        <begin position="1"/>
        <end position="251"/>
    </location>
</feature>
<feature type="active site" description="Electrophile" evidence="1">
    <location>
        <position position="95"/>
    </location>
</feature>
<feature type="active site" description="Proton acceptor" evidence="1">
    <location>
        <position position="167"/>
    </location>
</feature>
<feature type="binding site" evidence="1">
    <location>
        <begin position="9"/>
        <end position="11"/>
    </location>
    <ligand>
        <name>substrate</name>
    </ligand>
</feature>
<feature type="binding site" evidence="1">
    <location>
        <position position="173"/>
    </location>
    <ligand>
        <name>substrate</name>
    </ligand>
</feature>
<feature type="binding site" evidence="1">
    <location>
        <position position="213"/>
    </location>
    <ligand>
        <name>substrate</name>
    </ligand>
</feature>
<feature type="binding site" evidence="1">
    <location>
        <begin position="234"/>
        <end position="235"/>
    </location>
    <ligand>
        <name>substrate</name>
    </ligand>
</feature>
<feature type="modified residue" description="Phosphoserine" evidence="1">
    <location>
        <position position="213"/>
    </location>
</feature>
<accession>P60180</accession>
<reference key="1">
    <citation type="journal article" date="2003" name="Nature">
        <title>Genome sequence of Bacillus cereus and comparative analysis with Bacillus anthracis.</title>
        <authorList>
            <person name="Ivanova N."/>
            <person name="Sorokin A."/>
            <person name="Anderson I."/>
            <person name="Galleron N."/>
            <person name="Candelon B."/>
            <person name="Kapatral V."/>
            <person name="Bhattacharyya A."/>
            <person name="Reznik G."/>
            <person name="Mikhailova N."/>
            <person name="Lapidus A."/>
            <person name="Chu L."/>
            <person name="Mazur M."/>
            <person name="Goltsman E."/>
            <person name="Larsen N."/>
            <person name="D'Souza M."/>
            <person name="Walunas T."/>
            <person name="Grechkin Y."/>
            <person name="Pusch G."/>
            <person name="Haselkorn R."/>
            <person name="Fonstein M."/>
            <person name="Ehrlich S.D."/>
            <person name="Overbeek R."/>
            <person name="Kyrpides N.C."/>
        </authorList>
    </citation>
    <scope>NUCLEOTIDE SEQUENCE [LARGE SCALE GENOMIC DNA]</scope>
    <source>
        <strain>ATCC 14579 / DSM 31 / CCUG 7414 / JCM 2152 / NBRC 15305 / NCIMB 9373 / NCTC 2599 / NRRL B-3711</strain>
    </source>
</reference>